<accession>Q6CK68</accession>
<feature type="chain" id="PRO_0000076185" description="Protein BUR2">
    <location>
        <begin position="1"/>
        <end position="394"/>
    </location>
</feature>
<feature type="region of interest" description="Disordered" evidence="2">
    <location>
        <begin position="1"/>
        <end position="32"/>
    </location>
</feature>
<feature type="region of interest" description="Disordered" evidence="2">
    <location>
        <begin position="372"/>
        <end position="394"/>
    </location>
</feature>
<feature type="compositionally biased region" description="Polar residues" evidence="2">
    <location>
        <begin position="9"/>
        <end position="32"/>
    </location>
</feature>
<feature type="compositionally biased region" description="Basic and acidic residues" evidence="2">
    <location>
        <begin position="372"/>
        <end position="381"/>
    </location>
</feature>
<name>BUR2_KLULA</name>
<evidence type="ECO:0000250" key="1"/>
<evidence type="ECO:0000256" key="2">
    <source>
        <dbReference type="SAM" id="MobiDB-lite"/>
    </source>
</evidence>
<sequence length="394" mass="46015">MVLSASEEIANSQPSGNGKTSLDIKQNEGNPQFNPRNLWPDIIKCPKNEWTFEYTDIIKRLGTDEEKIQLTKKRMEKCLMYFHKLRKEMKLFDHTYTAACILFYRYWYKYDLPPTIPQCIHLAQAILVTACKTMENNRPTDHYIKATCDFMMKDGPSPTGQKLNVEKLKWEVRDQLVSYEKKVLCQLGFDLDIDNPKELIEEIFSGYYRHVRDTDIDASLREIFPVILQEARNFIIQTGTQPISLLCDGYTLVALALIFAGVTFQKNKEPGFSFPHNFFRRRFPVIITSEIIASLFSHYQQLEKAFFDLKSNKNSALSITVDEIDKVIDEDRQLDPEPFNPYDYDIIKEGEVNEELLNYTERKIEELSNRIMSERSIKRPSEPPAEQATKKPRF</sequence>
<keyword id="KW-0131">Cell cycle</keyword>
<keyword id="KW-0539">Nucleus</keyword>
<keyword id="KW-1185">Reference proteome</keyword>
<keyword id="KW-0804">Transcription</keyword>
<keyword id="KW-0805">Transcription regulation</keyword>
<protein>
    <recommendedName>
        <fullName>Protein BUR2</fullName>
    </recommendedName>
</protein>
<comment type="function">
    <text evidence="1">Component of the BUR kinase complex involved in transcription regulation. This complex phosphorylates the UBC2/RAD6 ubiquitin-conjugating enzyme (E2), leading to monoubiquitination of histone H2B and the silencing of telomeric-associated genes. Also required for histone H3 methylation. Necessary for the recovery from pheromone-induced growth arrest in the cell cycle G1 phase. The kinase activity of the complex requires the presence of BUR2. Overexpression of BUR2 interferes with mitotic chromosome segregation (By similarity).</text>
</comment>
<comment type="subunit">
    <text evidence="1">Belongs to the BUR kinase complex.</text>
</comment>
<comment type="subcellular location">
    <subcellularLocation>
        <location evidence="1">Nucleus</location>
    </subcellularLocation>
</comment>
<reference key="1">
    <citation type="journal article" date="2004" name="Nature">
        <title>Genome evolution in yeasts.</title>
        <authorList>
            <person name="Dujon B."/>
            <person name="Sherman D."/>
            <person name="Fischer G."/>
            <person name="Durrens P."/>
            <person name="Casaregola S."/>
            <person name="Lafontaine I."/>
            <person name="de Montigny J."/>
            <person name="Marck C."/>
            <person name="Neuveglise C."/>
            <person name="Talla E."/>
            <person name="Goffard N."/>
            <person name="Frangeul L."/>
            <person name="Aigle M."/>
            <person name="Anthouard V."/>
            <person name="Babour A."/>
            <person name="Barbe V."/>
            <person name="Barnay S."/>
            <person name="Blanchin S."/>
            <person name="Beckerich J.-M."/>
            <person name="Beyne E."/>
            <person name="Bleykasten C."/>
            <person name="Boisrame A."/>
            <person name="Boyer J."/>
            <person name="Cattolico L."/>
            <person name="Confanioleri F."/>
            <person name="de Daruvar A."/>
            <person name="Despons L."/>
            <person name="Fabre E."/>
            <person name="Fairhead C."/>
            <person name="Ferry-Dumazet H."/>
            <person name="Groppi A."/>
            <person name="Hantraye F."/>
            <person name="Hennequin C."/>
            <person name="Jauniaux N."/>
            <person name="Joyet P."/>
            <person name="Kachouri R."/>
            <person name="Kerrest A."/>
            <person name="Koszul R."/>
            <person name="Lemaire M."/>
            <person name="Lesur I."/>
            <person name="Ma L."/>
            <person name="Muller H."/>
            <person name="Nicaud J.-M."/>
            <person name="Nikolski M."/>
            <person name="Oztas S."/>
            <person name="Ozier-Kalogeropoulos O."/>
            <person name="Pellenz S."/>
            <person name="Potier S."/>
            <person name="Richard G.-F."/>
            <person name="Straub M.-L."/>
            <person name="Suleau A."/>
            <person name="Swennen D."/>
            <person name="Tekaia F."/>
            <person name="Wesolowski-Louvel M."/>
            <person name="Westhof E."/>
            <person name="Wirth B."/>
            <person name="Zeniou-Meyer M."/>
            <person name="Zivanovic Y."/>
            <person name="Bolotin-Fukuhara M."/>
            <person name="Thierry A."/>
            <person name="Bouchier C."/>
            <person name="Caudron B."/>
            <person name="Scarpelli C."/>
            <person name="Gaillardin C."/>
            <person name="Weissenbach J."/>
            <person name="Wincker P."/>
            <person name="Souciet J.-L."/>
        </authorList>
    </citation>
    <scope>NUCLEOTIDE SEQUENCE [LARGE SCALE GENOMIC DNA]</scope>
    <source>
        <strain>ATCC 8585 / CBS 2359 / DSM 70799 / NBRC 1267 / NRRL Y-1140 / WM37</strain>
    </source>
</reference>
<dbReference type="EMBL" id="CR382126">
    <property type="protein sequence ID" value="CAG98379.1"/>
    <property type="molecule type" value="Genomic_DNA"/>
</dbReference>
<dbReference type="RefSeq" id="XP_455671.1">
    <property type="nucleotide sequence ID" value="XM_455671.1"/>
</dbReference>
<dbReference type="SMR" id="Q6CK68"/>
<dbReference type="FunCoup" id="Q6CK68">
    <property type="interactions" value="135"/>
</dbReference>
<dbReference type="STRING" id="284590.Q6CK68"/>
<dbReference type="PaxDb" id="284590-Q6CK68"/>
<dbReference type="KEGG" id="kla:KLLA0_F13134g"/>
<dbReference type="eggNOG" id="ENOG502QQE8">
    <property type="taxonomic scope" value="Eukaryota"/>
</dbReference>
<dbReference type="HOGENOM" id="CLU_698596_0_0_1"/>
<dbReference type="InParanoid" id="Q6CK68"/>
<dbReference type="OMA" id="LFFRYWY"/>
<dbReference type="Proteomes" id="UP000000598">
    <property type="component" value="Chromosome F"/>
</dbReference>
<dbReference type="GO" id="GO:0005634">
    <property type="term" value="C:nucleus"/>
    <property type="evidence" value="ECO:0007669"/>
    <property type="project" value="UniProtKB-SubCell"/>
</dbReference>
<dbReference type="GO" id="GO:0016538">
    <property type="term" value="F:cyclin-dependent protein serine/threonine kinase regulator activity"/>
    <property type="evidence" value="ECO:0007669"/>
    <property type="project" value="InterPro"/>
</dbReference>
<dbReference type="GO" id="GO:0006357">
    <property type="term" value="P:regulation of transcription by RNA polymerase II"/>
    <property type="evidence" value="ECO:0007669"/>
    <property type="project" value="InterPro"/>
</dbReference>
<dbReference type="Gene3D" id="1.10.472.10">
    <property type="entry name" value="Cyclin-like"/>
    <property type="match status" value="1"/>
</dbReference>
<dbReference type="InterPro" id="IPR036915">
    <property type="entry name" value="Cyclin-like_sf"/>
</dbReference>
<dbReference type="InterPro" id="IPR043198">
    <property type="entry name" value="Cyclin/Ssn8"/>
</dbReference>
<dbReference type="PANTHER" id="PTHR10026">
    <property type="entry name" value="CYCLIN"/>
    <property type="match status" value="1"/>
</dbReference>
<dbReference type="SUPFAM" id="SSF47954">
    <property type="entry name" value="Cyclin-like"/>
    <property type="match status" value="1"/>
</dbReference>
<organism>
    <name type="scientific">Kluyveromyces lactis (strain ATCC 8585 / CBS 2359 / DSM 70799 / NBRC 1267 / NRRL Y-1140 / WM37)</name>
    <name type="common">Yeast</name>
    <name type="synonym">Candida sphaerica</name>
    <dbReference type="NCBI Taxonomy" id="284590"/>
    <lineage>
        <taxon>Eukaryota</taxon>
        <taxon>Fungi</taxon>
        <taxon>Dikarya</taxon>
        <taxon>Ascomycota</taxon>
        <taxon>Saccharomycotina</taxon>
        <taxon>Saccharomycetes</taxon>
        <taxon>Saccharomycetales</taxon>
        <taxon>Saccharomycetaceae</taxon>
        <taxon>Kluyveromyces</taxon>
    </lineage>
</organism>
<gene>
    <name type="primary">BUR2</name>
    <name type="ordered locus">KLLA0F13134g</name>
</gene>
<proteinExistence type="inferred from homology"/>